<evidence type="ECO:0000250" key="1">
    <source>
        <dbReference type="UniProtKB" id="P32455"/>
    </source>
</evidence>
<evidence type="ECO:0000250" key="2">
    <source>
        <dbReference type="UniProtKB" id="Q91Z40"/>
    </source>
</evidence>
<evidence type="ECO:0000255" key="3">
    <source>
        <dbReference type="PROSITE-ProRule" id="PRU01052"/>
    </source>
</evidence>
<evidence type="ECO:0000269" key="4">
    <source>
    </source>
</evidence>
<evidence type="ECO:0000269" key="5">
    <source>
    </source>
</evidence>
<reference key="1">
    <citation type="journal article" date="2004" name="Nat. Genet.">
        <title>Complete sequencing and characterization of 21,243 full-length human cDNAs.</title>
        <authorList>
            <person name="Ota T."/>
            <person name="Suzuki Y."/>
            <person name="Nishikawa T."/>
            <person name="Otsuki T."/>
            <person name="Sugiyama T."/>
            <person name="Irie R."/>
            <person name="Wakamatsu A."/>
            <person name="Hayashi K."/>
            <person name="Sato H."/>
            <person name="Nagai K."/>
            <person name="Kimura K."/>
            <person name="Makita H."/>
            <person name="Sekine M."/>
            <person name="Obayashi M."/>
            <person name="Nishi T."/>
            <person name="Shibahara T."/>
            <person name="Tanaka T."/>
            <person name="Ishii S."/>
            <person name="Yamamoto J."/>
            <person name="Saito K."/>
            <person name="Kawai Y."/>
            <person name="Isono Y."/>
            <person name="Nakamura Y."/>
            <person name="Nagahari K."/>
            <person name="Murakami K."/>
            <person name="Yasuda T."/>
            <person name="Iwayanagi T."/>
            <person name="Wagatsuma M."/>
            <person name="Shiratori A."/>
            <person name="Sudo H."/>
            <person name="Hosoiri T."/>
            <person name="Kaku Y."/>
            <person name="Kodaira H."/>
            <person name="Kondo H."/>
            <person name="Sugawara M."/>
            <person name="Takahashi M."/>
            <person name="Kanda K."/>
            <person name="Yokoi T."/>
            <person name="Furuya T."/>
            <person name="Kikkawa E."/>
            <person name="Omura Y."/>
            <person name="Abe K."/>
            <person name="Kamihara K."/>
            <person name="Katsuta N."/>
            <person name="Sato K."/>
            <person name="Tanikawa M."/>
            <person name="Yamazaki M."/>
            <person name="Ninomiya K."/>
            <person name="Ishibashi T."/>
            <person name="Yamashita H."/>
            <person name="Murakawa K."/>
            <person name="Fujimori K."/>
            <person name="Tanai H."/>
            <person name="Kimata M."/>
            <person name="Watanabe M."/>
            <person name="Hiraoka S."/>
            <person name="Chiba Y."/>
            <person name="Ishida S."/>
            <person name="Ono Y."/>
            <person name="Takiguchi S."/>
            <person name="Watanabe S."/>
            <person name="Yosida M."/>
            <person name="Hotuta T."/>
            <person name="Kusano J."/>
            <person name="Kanehori K."/>
            <person name="Takahashi-Fujii A."/>
            <person name="Hara H."/>
            <person name="Tanase T.-O."/>
            <person name="Nomura Y."/>
            <person name="Togiya S."/>
            <person name="Komai F."/>
            <person name="Hara R."/>
            <person name="Takeuchi K."/>
            <person name="Arita M."/>
            <person name="Imose N."/>
            <person name="Musashino K."/>
            <person name="Yuuki H."/>
            <person name="Oshima A."/>
            <person name="Sasaki N."/>
            <person name="Aotsuka S."/>
            <person name="Yoshikawa Y."/>
            <person name="Matsunawa H."/>
            <person name="Ichihara T."/>
            <person name="Shiohata N."/>
            <person name="Sano S."/>
            <person name="Moriya S."/>
            <person name="Momiyama H."/>
            <person name="Satoh N."/>
            <person name="Takami S."/>
            <person name="Terashima Y."/>
            <person name="Suzuki O."/>
            <person name="Nakagawa S."/>
            <person name="Senoh A."/>
            <person name="Mizoguchi H."/>
            <person name="Goto Y."/>
            <person name="Shimizu F."/>
            <person name="Wakebe H."/>
            <person name="Hishigaki H."/>
            <person name="Watanabe T."/>
            <person name="Sugiyama A."/>
            <person name="Takemoto M."/>
            <person name="Kawakami B."/>
            <person name="Yamazaki M."/>
            <person name="Watanabe K."/>
            <person name="Kumagai A."/>
            <person name="Itakura S."/>
            <person name="Fukuzumi Y."/>
            <person name="Fujimori Y."/>
            <person name="Komiyama M."/>
            <person name="Tashiro H."/>
            <person name="Tanigami A."/>
            <person name="Fujiwara T."/>
            <person name="Ono T."/>
            <person name="Yamada K."/>
            <person name="Fujii Y."/>
            <person name="Ozaki K."/>
            <person name="Hirao M."/>
            <person name="Ohmori Y."/>
            <person name="Kawabata A."/>
            <person name="Hikiji T."/>
            <person name="Kobatake N."/>
            <person name="Inagaki H."/>
            <person name="Ikema Y."/>
            <person name="Okamoto S."/>
            <person name="Okitani R."/>
            <person name="Kawakami T."/>
            <person name="Noguchi S."/>
            <person name="Itoh T."/>
            <person name="Shigeta K."/>
            <person name="Senba T."/>
            <person name="Matsumura K."/>
            <person name="Nakajima Y."/>
            <person name="Mizuno T."/>
            <person name="Morinaga M."/>
            <person name="Sasaki M."/>
            <person name="Togashi T."/>
            <person name="Oyama M."/>
            <person name="Hata H."/>
            <person name="Watanabe M."/>
            <person name="Komatsu T."/>
            <person name="Mizushima-Sugano J."/>
            <person name="Satoh T."/>
            <person name="Shirai Y."/>
            <person name="Takahashi Y."/>
            <person name="Nakagawa K."/>
            <person name="Okumura K."/>
            <person name="Nagase T."/>
            <person name="Nomura N."/>
            <person name="Kikuchi H."/>
            <person name="Masuho Y."/>
            <person name="Yamashita R."/>
            <person name="Nakai K."/>
            <person name="Yada T."/>
            <person name="Nakamura Y."/>
            <person name="Ohara O."/>
            <person name="Isogai T."/>
            <person name="Sugano S."/>
        </authorList>
    </citation>
    <scope>NUCLEOTIDE SEQUENCE [LARGE SCALE MRNA]</scope>
    <scope>VARIANT ILE-14</scope>
    <source>
        <tissue>Liver</tissue>
    </source>
</reference>
<reference key="2">
    <citation type="journal article" date="2006" name="Nature">
        <title>The DNA sequence and biological annotation of human chromosome 1.</title>
        <authorList>
            <person name="Gregory S.G."/>
            <person name="Barlow K.F."/>
            <person name="McLay K.E."/>
            <person name="Kaul R."/>
            <person name="Swarbreck D."/>
            <person name="Dunham A."/>
            <person name="Scott C.E."/>
            <person name="Howe K.L."/>
            <person name="Woodfine K."/>
            <person name="Spencer C.C.A."/>
            <person name="Jones M.C."/>
            <person name="Gillson C."/>
            <person name="Searle S."/>
            <person name="Zhou Y."/>
            <person name="Kokocinski F."/>
            <person name="McDonald L."/>
            <person name="Evans R."/>
            <person name="Phillips K."/>
            <person name="Atkinson A."/>
            <person name="Cooper R."/>
            <person name="Jones C."/>
            <person name="Hall R.E."/>
            <person name="Andrews T.D."/>
            <person name="Lloyd C."/>
            <person name="Ainscough R."/>
            <person name="Almeida J.P."/>
            <person name="Ambrose K.D."/>
            <person name="Anderson F."/>
            <person name="Andrew R.W."/>
            <person name="Ashwell R.I.S."/>
            <person name="Aubin K."/>
            <person name="Babbage A.K."/>
            <person name="Bagguley C.L."/>
            <person name="Bailey J."/>
            <person name="Beasley H."/>
            <person name="Bethel G."/>
            <person name="Bird C.P."/>
            <person name="Bray-Allen S."/>
            <person name="Brown J.Y."/>
            <person name="Brown A.J."/>
            <person name="Buckley D."/>
            <person name="Burton J."/>
            <person name="Bye J."/>
            <person name="Carder C."/>
            <person name="Chapman J.C."/>
            <person name="Clark S.Y."/>
            <person name="Clarke G."/>
            <person name="Clee C."/>
            <person name="Cobley V."/>
            <person name="Collier R.E."/>
            <person name="Corby N."/>
            <person name="Coville G.J."/>
            <person name="Davies J."/>
            <person name="Deadman R."/>
            <person name="Dunn M."/>
            <person name="Earthrowl M."/>
            <person name="Ellington A.G."/>
            <person name="Errington H."/>
            <person name="Frankish A."/>
            <person name="Frankland J."/>
            <person name="French L."/>
            <person name="Garner P."/>
            <person name="Garnett J."/>
            <person name="Gay L."/>
            <person name="Ghori M.R.J."/>
            <person name="Gibson R."/>
            <person name="Gilby L.M."/>
            <person name="Gillett W."/>
            <person name="Glithero R.J."/>
            <person name="Grafham D.V."/>
            <person name="Griffiths C."/>
            <person name="Griffiths-Jones S."/>
            <person name="Grocock R."/>
            <person name="Hammond S."/>
            <person name="Harrison E.S.I."/>
            <person name="Hart E."/>
            <person name="Haugen E."/>
            <person name="Heath P.D."/>
            <person name="Holmes S."/>
            <person name="Holt K."/>
            <person name="Howden P.J."/>
            <person name="Hunt A.R."/>
            <person name="Hunt S.E."/>
            <person name="Hunter G."/>
            <person name="Isherwood J."/>
            <person name="James R."/>
            <person name="Johnson C."/>
            <person name="Johnson D."/>
            <person name="Joy A."/>
            <person name="Kay M."/>
            <person name="Kershaw J.K."/>
            <person name="Kibukawa M."/>
            <person name="Kimberley A.M."/>
            <person name="King A."/>
            <person name="Knights A.J."/>
            <person name="Lad H."/>
            <person name="Laird G."/>
            <person name="Lawlor S."/>
            <person name="Leongamornlert D.A."/>
            <person name="Lloyd D.M."/>
            <person name="Loveland J."/>
            <person name="Lovell J."/>
            <person name="Lush M.J."/>
            <person name="Lyne R."/>
            <person name="Martin S."/>
            <person name="Mashreghi-Mohammadi M."/>
            <person name="Matthews L."/>
            <person name="Matthews N.S.W."/>
            <person name="McLaren S."/>
            <person name="Milne S."/>
            <person name="Mistry S."/>
            <person name="Moore M.J.F."/>
            <person name="Nickerson T."/>
            <person name="O'Dell C.N."/>
            <person name="Oliver K."/>
            <person name="Palmeiri A."/>
            <person name="Palmer S.A."/>
            <person name="Parker A."/>
            <person name="Patel D."/>
            <person name="Pearce A.V."/>
            <person name="Peck A.I."/>
            <person name="Pelan S."/>
            <person name="Phelps K."/>
            <person name="Phillimore B.J."/>
            <person name="Plumb R."/>
            <person name="Rajan J."/>
            <person name="Raymond C."/>
            <person name="Rouse G."/>
            <person name="Saenphimmachak C."/>
            <person name="Sehra H.K."/>
            <person name="Sheridan E."/>
            <person name="Shownkeen R."/>
            <person name="Sims S."/>
            <person name="Skuce C.D."/>
            <person name="Smith M."/>
            <person name="Steward C."/>
            <person name="Subramanian S."/>
            <person name="Sycamore N."/>
            <person name="Tracey A."/>
            <person name="Tromans A."/>
            <person name="Van Helmond Z."/>
            <person name="Wall M."/>
            <person name="Wallis J.M."/>
            <person name="White S."/>
            <person name="Whitehead S.L."/>
            <person name="Wilkinson J.E."/>
            <person name="Willey D.L."/>
            <person name="Williams H."/>
            <person name="Wilming L."/>
            <person name="Wray P.W."/>
            <person name="Wu Z."/>
            <person name="Coulson A."/>
            <person name="Vaudin M."/>
            <person name="Sulston J.E."/>
            <person name="Durbin R.M."/>
            <person name="Hubbard T."/>
            <person name="Wooster R."/>
            <person name="Dunham I."/>
            <person name="Carter N.P."/>
            <person name="McVean G."/>
            <person name="Ross M.T."/>
            <person name="Harrow J."/>
            <person name="Olson M.V."/>
            <person name="Beck S."/>
            <person name="Rogers J."/>
            <person name="Bentley D.R."/>
        </authorList>
    </citation>
    <scope>NUCLEOTIDE SEQUENCE [LARGE SCALE GENOMIC DNA]</scope>
</reference>
<reference key="3">
    <citation type="journal article" date="2021" name="J. Virol.">
        <title>Inducible Guanylate-Binding Protein 7 Facilitates Influenza A Virus Replication by Suppressing Innate Immunity via NF-kappaB and JAK-STAT Signaling Pathways.</title>
        <authorList>
            <person name="Feng M."/>
            <person name="Zhang Q."/>
            <person name="Wu W."/>
            <person name="Chen L."/>
            <person name="Gu S."/>
            <person name="Ye Y."/>
            <person name="Zhong Y."/>
            <person name="Huang Q."/>
            <person name="Liu S."/>
        </authorList>
    </citation>
    <scope>FUNCTION</scope>
    <scope>INDUCTION</scope>
</reference>
<accession>Q8N8V2</accession>
<feature type="chain" id="PRO_0000313654" description="Guanylate-binding protein 7">
    <location>
        <begin position="1"/>
        <end position="638"/>
    </location>
</feature>
<feature type="domain" description="GB1/RHD3-type G" evidence="3">
    <location>
        <begin position="35"/>
        <end position="277"/>
    </location>
</feature>
<feature type="region of interest" description="GTPase domain (Globular)" evidence="1">
    <location>
        <begin position="1"/>
        <end position="310"/>
    </location>
</feature>
<feature type="region of interest" description="Interaction with the CYBA-CYBB complex" evidence="2">
    <location>
        <begin position="311"/>
        <end position="638"/>
    </location>
</feature>
<feature type="region of interest" description="C-terminal tail; required for its localization to cytoplasmic vesicle" evidence="2">
    <location>
        <begin position="590"/>
        <end position="638"/>
    </location>
</feature>
<feature type="binding site" evidence="2">
    <location>
        <begin position="45"/>
        <end position="52"/>
    </location>
    <ligand>
        <name>GTP</name>
        <dbReference type="ChEBI" id="CHEBI:37565"/>
    </ligand>
</feature>
<feature type="binding site" evidence="1">
    <location>
        <begin position="67"/>
        <end position="69"/>
    </location>
    <ligand>
        <name>GTP</name>
        <dbReference type="ChEBI" id="CHEBI:37565"/>
    </ligand>
</feature>
<feature type="binding site" evidence="1">
    <location>
        <begin position="97"/>
        <end position="101"/>
    </location>
    <ligand>
        <name>GTP</name>
        <dbReference type="ChEBI" id="CHEBI:37565"/>
    </ligand>
</feature>
<feature type="sequence variant" id="VAR_037687" description="In dbSNP:rs676913." evidence="4">
    <original>T</original>
    <variation>I</variation>
    <location>
        <position position="14"/>
    </location>
</feature>
<feature type="sequence variant" id="VAR_037688" description="In dbSNP:rs1886297.">
    <original>G</original>
    <variation>R</variation>
    <location>
        <position position="618"/>
    </location>
</feature>
<keyword id="KW-0929">Antimicrobial</keyword>
<keyword id="KW-0051">Antiviral defense</keyword>
<keyword id="KW-0968">Cytoplasmic vesicle</keyword>
<keyword id="KW-0342">GTP-binding</keyword>
<keyword id="KW-0378">Hydrolase</keyword>
<keyword id="KW-0391">Immunity</keyword>
<keyword id="KW-0399">Innate immunity</keyword>
<keyword id="KW-0472">Membrane</keyword>
<keyword id="KW-0547">Nucleotide-binding</keyword>
<keyword id="KW-1267">Proteomics identification</keyword>
<keyword id="KW-1185">Reference proteome</keyword>
<organism>
    <name type="scientific">Homo sapiens</name>
    <name type="common">Human</name>
    <dbReference type="NCBI Taxonomy" id="9606"/>
    <lineage>
        <taxon>Eukaryota</taxon>
        <taxon>Metazoa</taxon>
        <taxon>Chordata</taxon>
        <taxon>Craniata</taxon>
        <taxon>Vertebrata</taxon>
        <taxon>Euteleostomi</taxon>
        <taxon>Mammalia</taxon>
        <taxon>Eutheria</taxon>
        <taxon>Euarchontoglires</taxon>
        <taxon>Primates</taxon>
        <taxon>Haplorrhini</taxon>
        <taxon>Catarrhini</taxon>
        <taxon>Hominidae</taxon>
        <taxon>Homo</taxon>
    </lineage>
</organism>
<protein>
    <recommendedName>
        <fullName>Guanylate-binding protein 7</fullName>
        <ecNumber evidence="2">3.6.1.-</ecNumber>
        <ecNumber evidence="2">3.6.5.-</ecNumber>
    </recommendedName>
    <alternativeName>
        <fullName>GTP-binding protein 7</fullName>
        <shortName>GBP-7</shortName>
    </alternativeName>
    <alternativeName>
        <fullName>Guanine nucleotide-binding protein 7</fullName>
    </alternativeName>
    <alternativeName>
        <fullName>Guanylate-binding protein 4-like</fullName>
    </alternativeName>
</protein>
<dbReference type="EC" id="3.6.1.-" evidence="2"/>
<dbReference type="EC" id="3.6.5.-" evidence="2"/>
<dbReference type="EMBL" id="AK096141">
    <property type="protein sequence ID" value="BAC04709.1"/>
    <property type="molecule type" value="mRNA"/>
</dbReference>
<dbReference type="EMBL" id="AC104459">
    <property type="status" value="NOT_ANNOTATED_CDS"/>
    <property type="molecule type" value="Genomic_DNA"/>
</dbReference>
<dbReference type="CCDS" id="CCDS720.1"/>
<dbReference type="RefSeq" id="NP_997281.2">
    <property type="nucleotide sequence ID" value="NM_207398.3"/>
</dbReference>
<dbReference type="SMR" id="Q8N8V2"/>
<dbReference type="BioGRID" id="132790">
    <property type="interactions" value="14"/>
</dbReference>
<dbReference type="FunCoup" id="Q8N8V2">
    <property type="interactions" value="191"/>
</dbReference>
<dbReference type="IntAct" id="Q8N8V2">
    <property type="interactions" value="7"/>
</dbReference>
<dbReference type="MINT" id="Q8N8V2"/>
<dbReference type="STRING" id="9606.ENSP00000294671"/>
<dbReference type="iPTMnet" id="Q8N8V2"/>
<dbReference type="PhosphoSitePlus" id="Q8N8V2"/>
<dbReference type="BioMuta" id="GBP7"/>
<dbReference type="DMDM" id="311033384"/>
<dbReference type="jPOST" id="Q8N8V2"/>
<dbReference type="MassIVE" id="Q8N8V2"/>
<dbReference type="PaxDb" id="9606-ENSP00000294671"/>
<dbReference type="PeptideAtlas" id="Q8N8V2"/>
<dbReference type="ProteomicsDB" id="72463"/>
<dbReference type="Antibodypedia" id="53266">
    <property type="antibodies" value="58 antibodies from 16 providers"/>
</dbReference>
<dbReference type="DNASU" id="388646"/>
<dbReference type="Ensembl" id="ENST00000294671.3">
    <property type="protein sequence ID" value="ENSP00000294671.2"/>
    <property type="gene ID" value="ENSG00000213512.3"/>
</dbReference>
<dbReference type="GeneID" id="388646"/>
<dbReference type="KEGG" id="hsa:388646"/>
<dbReference type="MANE-Select" id="ENST00000294671.3">
    <property type="protein sequence ID" value="ENSP00000294671.2"/>
    <property type="RefSeq nucleotide sequence ID" value="NM_207398.3"/>
    <property type="RefSeq protein sequence ID" value="NP_997281.2"/>
</dbReference>
<dbReference type="UCSC" id="uc001dna.2">
    <property type="organism name" value="human"/>
</dbReference>
<dbReference type="AGR" id="HGNC:29606"/>
<dbReference type="CTD" id="388646"/>
<dbReference type="DisGeNET" id="388646"/>
<dbReference type="GeneCards" id="GBP7"/>
<dbReference type="HGNC" id="HGNC:29606">
    <property type="gene designation" value="GBP7"/>
</dbReference>
<dbReference type="HPA" id="ENSG00000213512">
    <property type="expression patterns" value="Tissue enriched (liver)"/>
</dbReference>
<dbReference type="MIM" id="612468">
    <property type="type" value="gene"/>
</dbReference>
<dbReference type="neXtProt" id="NX_Q8N8V2"/>
<dbReference type="OpenTargets" id="ENSG00000213512"/>
<dbReference type="PharmGKB" id="PA142671744"/>
<dbReference type="VEuPathDB" id="HostDB:ENSG00000213512"/>
<dbReference type="eggNOG" id="KOG2037">
    <property type="taxonomic scope" value="Eukaryota"/>
</dbReference>
<dbReference type="GeneTree" id="ENSGT00940000164365"/>
<dbReference type="HOGENOM" id="CLU_018608_2_1_1"/>
<dbReference type="InParanoid" id="Q8N8V2"/>
<dbReference type="OMA" id="LCDMDDQ"/>
<dbReference type="OrthoDB" id="2135133at2759"/>
<dbReference type="PAN-GO" id="Q8N8V2">
    <property type="GO annotations" value="6 GO annotations based on evolutionary models"/>
</dbReference>
<dbReference type="PhylomeDB" id="Q8N8V2"/>
<dbReference type="TreeFam" id="TF331602"/>
<dbReference type="PathwayCommons" id="Q8N8V2"/>
<dbReference type="Reactome" id="R-HSA-877300">
    <property type="pathway name" value="Interferon gamma signaling"/>
</dbReference>
<dbReference type="SignaLink" id="Q8N8V2"/>
<dbReference type="BioGRID-ORCS" id="388646">
    <property type="hits" value="5 hits in 1135 CRISPR screens"/>
</dbReference>
<dbReference type="GenomeRNAi" id="388646"/>
<dbReference type="Pharos" id="Q8N8V2">
    <property type="development level" value="Tbio"/>
</dbReference>
<dbReference type="PRO" id="PR:Q8N8V2"/>
<dbReference type="Proteomes" id="UP000005640">
    <property type="component" value="Chromosome 1"/>
</dbReference>
<dbReference type="RNAct" id="Q8N8V2">
    <property type="molecule type" value="protein"/>
</dbReference>
<dbReference type="Bgee" id="ENSG00000213512">
    <property type="expression patterns" value="Expressed in right lobe of liver and 33 other cell types or tissues"/>
</dbReference>
<dbReference type="ExpressionAtlas" id="Q8N8V2">
    <property type="expression patterns" value="baseline and differential"/>
</dbReference>
<dbReference type="GO" id="GO:0031410">
    <property type="term" value="C:cytoplasmic vesicle"/>
    <property type="evidence" value="ECO:0000250"/>
    <property type="project" value="UniProtKB"/>
</dbReference>
<dbReference type="GO" id="GO:0030659">
    <property type="term" value="C:cytoplasmic vesicle membrane"/>
    <property type="evidence" value="ECO:0007669"/>
    <property type="project" value="UniProtKB-SubCell"/>
</dbReference>
<dbReference type="GO" id="GO:0005525">
    <property type="term" value="F:GTP binding"/>
    <property type="evidence" value="ECO:0000250"/>
    <property type="project" value="UniProtKB"/>
</dbReference>
<dbReference type="GO" id="GO:0003924">
    <property type="term" value="F:GTPase activity"/>
    <property type="evidence" value="ECO:0000250"/>
    <property type="project" value="UniProtKB"/>
</dbReference>
<dbReference type="GO" id="GO:0071346">
    <property type="term" value="P:cellular response to type II interferon"/>
    <property type="evidence" value="ECO:0000318"/>
    <property type="project" value="GO_Central"/>
</dbReference>
<dbReference type="GO" id="GO:0051715">
    <property type="term" value="P:cytolysis in another organism"/>
    <property type="evidence" value="ECO:0000250"/>
    <property type="project" value="UniProtKB"/>
</dbReference>
<dbReference type="GO" id="GO:0042742">
    <property type="term" value="P:defense response to bacterium"/>
    <property type="evidence" value="ECO:0000250"/>
    <property type="project" value="UniProtKB"/>
</dbReference>
<dbReference type="GO" id="GO:0050830">
    <property type="term" value="P:defense response to Gram-positive bacterium"/>
    <property type="evidence" value="ECO:0000318"/>
    <property type="project" value="GO_Central"/>
</dbReference>
<dbReference type="GO" id="GO:0042832">
    <property type="term" value="P:defense response to protozoan"/>
    <property type="evidence" value="ECO:0000250"/>
    <property type="project" value="UniProtKB"/>
</dbReference>
<dbReference type="GO" id="GO:0051607">
    <property type="term" value="P:defense response to virus"/>
    <property type="evidence" value="ECO:0000314"/>
    <property type="project" value="UniProtKB"/>
</dbReference>
<dbReference type="GO" id="GO:0001818">
    <property type="term" value="P:negative regulation of cytokine production"/>
    <property type="evidence" value="ECO:0000315"/>
    <property type="project" value="UniProtKB"/>
</dbReference>
<dbReference type="GO" id="GO:0046426">
    <property type="term" value="P:negative regulation of receptor signaling pathway via JAK-STAT"/>
    <property type="evidence" value="ECO:0000315"/>
    <property type="project" value="UniProtKB"/>
</dbReference>
<dbReference type="GO" id="GO:0032480">
    <property type="term" value="P:negative regulation of type I interferon production"/>
    <property type="evidence" value="ECO:0000315"/>
    <property type="project" value="UniProtKB"/>
</dbReference>
<dbReference type="GO" id="GO:0034345">
    <property type="term" value="P:negative regulation of type III interferon production"/>
    <property type="evidence" value="ECO:0000315"/>
    <property type="project" value="UniProtKB"/>
</dbReference>
<dbReference type="GO" id="GO:0045070">
    <property type="term" value="P:positive regulation of viral genome replication"/>
    <property type="evidence" value="ECO:0000315"/>
    <property type="project" value="UniProtKB"/>
</dbReference>
<dbReference type="GO" id="GO:0043122">
    <property type="term" value="P:regulation of canonical NF-kappaB signal transduction"/>
    <property type="evidence" value="ECO:0000315"/>
    <property type="project" value="UniProtKB"/>
</dbReference>
<dbReference type="CDD" id="cd01851">
    <property type="entry name" value="GBP"/>
    <property type="match status" value="1"/>
</dbReference>
<dbReference type="CDD" id="cd16269">
    <property type="entry name" value="GBP_C"/>
    <property type="match status" value="1"/>
</dbReference>
<dbReference type="FunFam" id="1.20.1000.10:FF:000001">
    <property type="entry name" value="Guanylate binding protein 1"/>
    <property type="match status" value="1"/>
</dbReference>
<dbReference type="FunFam" id="3.40.50.300:FF:000422">
    <property type="entry name" value="Guanylate-binding protein 1"/>
    <property type="match status" value="1"/>
</dbReference>
<dbReference type="Gene3D" id="1.20.1000.10">
    <property type="entry name" value="Guanylate-binding protein, C-terminal domain"/>
    <property type="match status" value="1"/>
</dbReference>
<dbReference type="Gene3D" id="3.40.50.300">
    <property type="entry name" value="P-loop containing nucleotide triphosphate hydrolases"/>
    <property type="match status" value="1"/>
</dbReference>
<dbReference type="InterPro" id="IPR030386">
    <property type="entry name" value="G_GB1_RHD3_dom"/>
</dbReference>
<dbReference type="InterPro" id="IPR037684">
    <property type="entry name" value="GBP_C"/>
</dbReference>
<dbReference type="InterPro" id="IPR003191">
    <property type="entry name" value="Guanylate-bd/ATL_C"/>
</dbReference>
<dbReference type="InterPro" id="IPR036543">
    <property type="entry name" value="Guanylate-bd_C_sf"/>
</dbReference>
<dbReference type="InterPro" id="IPR015894">
    <property type="entry name" value="Guanylate-bd_N"/>
</dbReference>
<dbReference type="InterPro" id="IPR027417">
    <property type="entry name" value="P-loop_NTPase"/>
</dbReference>
<dbReference type="PANTHER" id="PTHR10751">
    <property type="entry name" value="GUANYLATE BINDING PROTEIN"/>
    <property type="match status" value="1"/>
</dbReference>
<dbReference type="Pfam" id="PF02263">
    <property type="entry name" value="GBP"/>
    <property type="match status" value="1"/>
</dbReference>
<dbReference type="Pfam" id="PF02841">
    <property type="entry name" value="GBP_C"/>
    <property type="match status" value="1"/>
</dbReference>
<dbReference type="SUPFAM" id="SSF48340">
    <property type="entry name" value="Interferon-induced guanylate-binding protein 1 (GBP1), C-terminal domain"/>
    <property type="match status" value="1"/>
</dbReference>
<dbReference type="SUPFAM" id="SSF52540">
    <property type="entry name" value="P-loop containing nucleoside triphosphate hydrolases"/>
    <property type="match status" value="1"/>
</dbReference>
<dbReference type="PROSITE" id="PS51715">
    <property type="entry name" value="G_GB1_RHD3"/>
    <property type="match status" value="1"/>
</dbReference>
<gene>
    <name type="primary">GBP7</name>
    <name type="synonym">GBP4L</name>
</gene>
<proteinExistence type="evidence at protein level"/>
<comment type="function">
    <text evidence="2 5">Interferon (IFN)-inducible GTPase that plays important roles in innate immunity against a diverse range of bacterial, viral and protozoan pathogens (By similarity). Hydrolyzes GTP to GMP in two consecutive cleavage reactions and predominantly uses GTP and not GDP or GMP as the substrate (By similarity). Following infection, recruited to the pathogen-containing vacuoles or vacuole-escaped bacteria and acts as a positive regulator of inflammasome assembly by promoting the release of inflammasome ligands from bacteria (By similarity). Acts by promoting lysis of pathogen-containing vacuoles, releasing pathogens into the cytosol (By similarity). Following pathogen release in the cytosol, promotes recruitment of proteins that mediate bacterial cytolysis: this liberates ligands that are detected by inflammasomes, such as lipopolysaccharide (LPS) that activates the non-canonical CASP4/CASP11 inflammasome or double-stranded DNA (dsDNA) that activates the AIM2 inflammasome (By similarity). Also promotes IFN-gamma-mediated host defense against bacterial infections by regulating oxidative responses and bacteriolytic peptide generation (By similarity). May help to assemble NADPH oxidase on phagosomal membranes by acting as a bridging protein between NADPH oxidase cytosolic subunits NCF2-NCF4 and the membrane subunits CYBA-CYBB (By similarity). Participates along with GBP1 in trafficking monoubiquinated protein cargo to autolysosomes for generating ubiquitin-derived antimicrobial peptides (By similarity). Facilitates influenza A virus replication by inhibiting the activation of NF-kappaB and JAK-STAT signaling pathways and the expression of type I, type III interferons and pro-inflammatory cytokines (PubMed:33408175). Confers protection to several pathogens, including the bacterial pathogens Listeria monocytogenes and Mycobacterium bovis BCG as well as the protozoan pathogen Toxoplasma gondii (By similarity). Required for disruption of the parasitophorous vacuole formed following T.gondii infection and subsequent killing of the parasite (By similarity).</text>
</comment>
<comment type="catalytic activity">
    <reaction evidence="2">
        <text>GTP + H2O = GDP + phosphate + H(+)</text>
        <dbReference type="Rhea" id="RHEA:19669"/>
        <dbReference type="ChEBI" id="CHEBI:15377"/>
        <dbReference type="ChEBI" id="CHEBI:15378"/>
        <dbReference type="ChEBI" id="CHEBI:37565"/>
        <dbReference type="ChEBI" id="CHEBI:43474"/>
        <dbReference type="ChEBI" id="CHEBI:58189"/>
    </reaction>
    <physiologicalReaction direction="left-to-right" evidence="2">
        <dbReference type="Rhea" id="RHEA:19670"/>
    </physiologicalReaction>
</comment>
<comment type="catalytic activity">
    <reaction evidence="2">
        <text>GDP + H2O = GMP + phosphate + H(+)</text>
        <dbReference type="Rhea" id="RHEA:22156"/>
        <dbReference type="ChEBI" id="CHEBI:15377"/>
        <dbReference type="ChEBI" id="CHEBI:15378"/>
        <dbReference type="ChEBI" id="CHEBI:43474"/>
        <dbReference type="ChEBI" id="CHEBI:58115"/>
        <dbReference type="ChEBI" id="CHEBI:58189"/>
    </reaction>
    <physiologicalReaction direction="left-to-right" evidence="2">
        <dbReference type="Rhea" id="RHEA:22157"/>
    </physiologicalReaction>
</comment>
<comment type="subunit">
    <text evidence="2">Monomer and dimer (By similarity). Interacts with CYBA, CYBA-CYBB complex and ATG4B (By similarity). Interacts (via GB1/RHD3-type G domain) with NCF2 and NCF2-NCF4 complex (By similarity).</text>
</comment>
<comment type="interaction">
    <interactant intactId="EBI-21835810">
        <id>Q8N8V2</id>
    </interactant>
    <interactant intactId="EBI-7097057">
        <id>Q96FN4</id>
        <label>CPNE2</label>
    </interactant>
    <organismsDiffer>false</organismsDiffer>
    <experiments>3</experiments>
</comment>
<comment type="interaction">
    <interactant intactId="EBI-21835810">
        <id>Q8N8V2</id>
    </interactant>
    <interactant intactId="EBI-20864397">
        <id>Q6ZN66</id>
        <label>GBP6</label>
    </interactant>
    <organismsDiffer>false</organismsDiffer>
    <experiments>2</experiments>
</comment>
<comment type="interaction">
    <interactant intactId="EBI-21835810">
        <id>Q8N8V2</id>
    </interactant>
    <interactant intactId="EBI-741171">
        <id>Q96AL5</id>
        <label>PBX3</label>
    </interactant>
    <organismsDiffer>false</organismsDiffer>
    <experiments>3</experiments>
</comment>
<comment type="subcellular location">
    <subcellularLocation>
        <location evidence="2">Cytoplasmic vesicle membrane</location>
    </subcellularLocation>
</comment>
<comment type="induction">
    <text evidence="5">Up-regulated in response to influenza virus A infection.</text>
</comment>
<comment type="similarity">
    <text evidence="3">Belongs to the TRAFAC class dynamin-like GTPase superfamily. GB1/RHD3 GTPase family. GB1 subfamily.</text>
</comment>
<name>GBP7_HUMAN</name>
<sequence length="638" mass="72513">MASEIHMPGPVCLTENTKGHLVVNSEALEILSAITQPVVVVAIVGLYRTGKSYLMNKLAGKNKGFPLGCTVKSETKGIWMWCVPHPSKPNHTLILLDTEGLGDMEKSDPKSDSWIFALAVLLSSSFVYNSMGTINHQALEQLHYVTELTELIRAKSCPRPDEVEDSSEFVSFFPDFIWTVRDFTLELKLDGHPITEDEYLENALKLISGKNPQIQNSNKPREWIRHFFPKQKCFVFDRPINDKKLLLHVEEVREDQLDSNFQMQSENFCSYIFTHAKTKTLREGILVTGNRLGMLVETYLDAINSGATPCLENAMAVLAQCENSAAVQRAANHYSQQMAQQVRFPTDTLQELLDVHAVCEREAIAVFMEYSFKDKSQEFQKKLVDTMEKKKEDFVLQNEEASAKYCQAELKRLSELLTESISRGTFFVPGGHNIYLEAKKKIEQDYTLVPRKGVKADEVLQSFLQSQVVIEESILQSDKALTAGEKAIAAKQAKKEAAEKEQELLRQKQKEQQQMMEAQERSFQENIAQLKKKMERERENYMRELRKMLSHKMKVLEELLTEGFKEIFESLNEEINRLKEQIEAAENEEPSVFSQILDVAGSIFIAALPGAAKLVDLGMKILSSLCNRLRNPGKKIIS</sequence>